<dbReference type="EC" id="2.7.7.6" evidence="1"/>
<dbReference type="EMBL" id="X89231">
    <property type="protein sequence ID" value="CAA61515.1"/>
    <property type="molecule type" value="Genomic_DNA"/>
</dbReference>
<dbReference type="SMR" id="P77839"/>
<dbReference type="STRING" id="2756.BFR44_11410"/>
<dbReference type="GO" id="GO:0000428">
    <property type="term" value="C:DNA-directed RNA polymerase complex"/>
    <property type="evidence" value="ECO:0007669"/>
    <property type="project" value="UniProtKB-KW"/>
</dbReference>
<dbReference type="GO" id="GO:0003677">
    <property type="term" value="F:DNA binding"/>
    <property type="evidence" value="ECO:0007669"/>
    <property type="project" value="InterPro"/>
</dbReference>
<dbReference type="GO" id="GO:0003899">
    <property type="term" value="F:DNA-directed RNA polymerase activity"/>
    <property type="evidence" value="ECO:0007669"/>
    <property type="project" value="UniProtKB-EC"/>
</dbReference>
<dbReference type="GO" id="GO:0046872">
    <property type="term" value="F:metal ion binding"/>
    <property type="evidence" value="ECO:0007669"/>
    <property type="project" value="UniProtKB-KW"/>
</dbReference>
<dbReference type="GO" id="GO:0006351">
    <property type="term" value="P:DNA-templated transcription"/>
    <property type="evidence" value="ECO:0007669"/>
    <property type="project" value="InterPro"/>
</dbReference>
<dbReference type="CDD" id="cd01609">
    <property type="entry name" value="RNAP_beta'_N"/>
    <property type="match status" value="1"/>
</dbReference>
<dbReference type="FunFam" id="4.10.860.120:FF:000001">
    <property type="entry name" value="DNA-directed RNA polymerase subunit beta"/>
    <property type="match status" value="1"/>
</dbReference>
<dbReference type="Gene3D" id="1.10.132.30">
    <property type="match status" value="1"/>
</dbReference>
<dbReference type="Gene3D" id="1.10.1790.20">
    <property type="match status" value="1"/>
</dbReference>
<dbReference type="Gene3D" id="1.10.40.90">
    <property type="match status" value="1"/>
</dbReference>
<dbReference type="Gene3D" id="2.40.40.20">
    <property type="match status" value="1"/>
</dbReference>
<dbReference type="Gene3D" id="2.40.50.100">
    <property type="match status" value="1"/>
</dbReference>
<dbReference type="Gene3D" id="4.10.860.120">
    <property type="entry name" value="RNA polymerase II, clamp domain"/>
    <property type="match status" value="1"/>
</dbReference>
<dbReference type="Gene3D" id="1.10.274.100">
    <property type="entry name" value="RNA polymerase Rpb1, domain 3"/>
    <property type="match status" value="1"/>
</dbReference>
<dbReference type="HAMAP" id="MF_01322">
    <property type="entry name" value="RNApol_bact_RpoC"/>
    <property type="match status" value="1"/>
</dbReference>
<dbReference type="InterPro" id="IPR045867">
    <property type="entry name" value="DNA-dir_RpoC_beta_prime"/>
</dbReference>
<dbReference type="InterPro" id="IPR012754">
    <property type="entry name" value="DNA-dir_RpoC_beta_prime_bact"/>
</dbReference>
<dbReference type="InterPro" id="IPR000722">
    <property type="entry name" value="RNA_pol_asu"/>
</dbReference>
<dbReference type="InterPro" id="IPR006592">
    <property type="entry name" value="RNA_pol_N"/>
</dbReference>
<dbReference type="InterPro" id="IPR007080">
    <property type="entry name" value="RNA_pol_Rpb1_1"/>
</dbReference>
<dbReference type="InterPro" id="IPR007066">
    <property type="entry name" value="RNA_pol_Rpb1_3"/>
</dbReference>
<dbReference type="InterPro" id="IPR042102">
    <property type="entry name" value="RNA_pol_Rpb1_3_sf"/>
</dbReference>
<dbReference type="InterPro" id="IPR007083">
    <property type="entry name" value="RNA_pol_Rpb1_4"/>
</dbReference>
<dbReference type="InterPro" id="IPR007081">
    <property type="entry name" value="RNA_pol_Rpb1_5"/>
</dbReference>
<dbReference type="InterPro" id="IPR044893">
    <property type="entry name" value="RNA_pol_Rpb1_clamp_domain"/>
</dbReference>
<dbReference type="InterPro" id="IPR038120">
    <property type="entry name" value="Rpb1_funnel_sf"/>
</dbReference>
<dbReference type="NCBIfam" id="TIGR02386">
    <property type="entry name" value="rpoC_TIGR"/>
    <property type="match status" value="1"/>
</dbReference>
<dbReference type="PANTHER" id="PTHR19376">
    <property type="entry name" value="DNA-DIRECTED RNA POLYMERASE"/>
    <property type="match status" value="1"/>
</dbReference>
<dbReference type="PANTHER" id="PTHR19376:SF54">
    <property type="entry name" value="DNA-DIRECTED RNA POLYMERASE SUBUNIT BETA"/>
    <property type="match status" value="1"/>
</dbReference>
<dbReference type="Pfam" id="PF04997">
    <property type="entry name" value="RNA_pol_Rpb1_1"/>
    <property type="match status" value="1"/>
</dbReference>
<dbReference type="Pfam" id="PF00623">
    <property type="entry name" value="RNA_pol_Rpb1_2"/>
    <property type="match status" value="1"/>
</dbReference>
<dbReference type="Pfam" id="PF04983">
    <property type="entry name" value="RNA_pol_Rpb1_3"/>
    <property type="match status" value="1"/>
</dbReference>
<dbReference type="Pfam" id="PF05000">
    <property type="entry name" value="RNA_pol_Rpb1_4"/>
    <property type="match status" value="1"/>
</dbReference>
<dbReference type="Pfam" id="PF04998">
    <property type="entry name" value="RNA_pol_Rpb1_5"/>
    <property type="match status" value="1"/>
</dbReference>
<dbReference type="SMART" id="SM00663">
    <property type="entry name" value="RPOLA_N"/>
    <property type="match status" value="1"/>
</dbReference>
<dbReference type="SUPFAM" id="SSF64484">
    <property type="entry name" value="beta and beta-prime subunits of DNA dependent RNA-polymerase"/>
    <property type="match status" value="1"/>
</dbReference>
<accession>P77839</accession>
<organism>
    <name type="scientific">Brochothrix thermosphacta</name>
    <name type="common">Microbacterium thermosphactum</name>
    <dbReference type="NCBI Taxonomy" id="2756"/>
    <lineage>
        <taxon>Bacteria</taxon>
        <taxon>Bacillati</taxon>
        <taxon>Bacillota</taxon>
        <taxon>Bacilli</taxon>
        <taxon>Bacillales</taxon>
        <taxon>Listeriaceae</taxon>
        <taxon>Brochothrix</taxon>
    </lineage>
</organism>
<evidence type="ECO:0000255" key="1">
    <source>
        <dbReference type="HAMAP-Rule" id="MF_01322"/>
    </source>
</evidence>
<evidence type="ECO:0000305" key="2"/>
<sequence length="1053" mass="118003">MLDVNNFEYMKIGLASPDKIRSWSFGEVKKPETINYRTLKPERDGLFCERIFGPTKDWECSCGKYKRVRYKGVVCDRCGVEVTKSKVRRERMGHIELAAPVSHIWYFKGIPSRMGLVLDMSPRALEEVIYFASYVVTEAGDTALDKKQLLSEREYRAYREKYGQSFQAGMGAEAIKRLLDAVDLEGEVTELKEELKSAQGQRRTRAIRRLEVLEAFRHSGNKPSWMVLDVLPVIPPEIRPMVQLEGGRFATSDLNDLYRRVINRNNRLKRLLDLGAPSIIVQNEKRMLQEAVDGLIDNGRRGRPVTGPGNRPLKSLSHMLKGKQGRFRQNLLGKRVDYSGRSVIVCGPSLKMYQCGLPREMAIELFKPFVMRELTQRGLAHNIKSAKRKIERHSPEIWDVLEDVIREHPVLLNRAPTLHRLGIQAFEPILVEGRAIRLHPLVCTAYNADFDGDQMAVHVPLSPEAQAEARILMLAANHILNPKDGKPVVTPSQDMVLGNYYLTLERENIVGEGLVFTDINEAMIAYQNGYVHLHSRVAVAAASLGNETFTAEQNNQLLITTVGKMIFNSILPPSFPYLNEPTKTNLEVATPSQYFVPTTTDVKAHIEKQAFLLPFKKKNLEEIIAQIFKLFHITETSKMLDRMKDQGFKYSTLAGITVGISDIIVVKDKPEILAASHDEVDNVTKMFKRGLMTDEERYERVIAIWNAAKDQLQNKLIAGLDRLNPIFMMQDSGARGNISNFTQLAGMRGLMADPSGRIVELPITSNFREGLNVLEYFISSHGARKGLTDTALKTADSGYLTRRLVDVAQDVIVRETNDGSDHGLLVSDIVEGPEVIETLTERLEGRYSAKTVRHPETNEVMIRPDELFTQEIAEAIPAAGIKEVWIRSVFTCNTKHGVSKISYGKDLSTGSEVEVGEAVGIVAAQSIGEPGTQLTMRTFHTGGVAGSDITQGLPRIQEIFEARNPKGHAVITELTGEVKAIEEKANRQREITVTGTQETRTYTVPMVARLKVKVGDAVRRGDPLMDGSIDPKELLHVTDVITVENYLLGEVQK</sequence>
<gene>
    <name evidence="1" type="primary">rpoC</name>
</gene>
<name>RPOC_BROTH</name>
<proteinExistence type="inferred from homology"/>
<feature type="chain" id="PRO_0000067719" description="DNA-directed RNA polymerase subunit beta'">
    <location>
        <begin position="1"/>
        <end position="1053" status="greater than"/>
    </location>
</feature>
<feature type="binding site" evidence="1">
    <location>
        <position position="60"/>
    </location>
    <ligand>
        <name>Zn(2+)</name>
        <dbReference type="ChEBI" id="CHEBI:29105"/>
        <label>1</label>
    </ligand>
</feature>
<feature type="binding site" evidence="1">
    <location>
        <position position="62"/>
    </location>
    <ligand>
        <name>Zn(2+)</name>
        <dbReference type="ChEBI" id="CHEBI:29105"/>
        <label>1</label>
    </ligand>
</feature>
<feature type="binding site" evidence="1">
    <location>
        <position position="75"/>
    </location>
    <ligand>
        <name>Zn(2+)</name>
        <dbReference type="ChEBI" id="CHEBI:29105"/>
        <label>1</label>
    </ligand>
</feature>
<feature type="binding site" evidence="1">
    <location>
        <position position="78"/>
    </location>
    <ligand>
        <name>Zn(2+)</name>
        <dbReference type="ChEBI" id="CHEBI:29105"/>
        <label>1</label>
    </ligand>
</feature>
<feature type="binding site" evidence="1">
    <location>
        <position position="449"/>
    </location>
    <ligand>
        <name>Mg(2+)</name>
        <dbReference type="ChEBI" id="CHEBI:18420"/>
    </ligand>
</feature>
<feature type="binding site" evidence="1">
    <location>
        <position position="451"/>
    </location>
    <ligand>
        <name>Mg(2+)</name>
        <dbReference type="ChEBI" id="CHEBI:18420"/>
    </ligand>
</feature>
<feature type="binding site" evidence="1">
    <location>
        <position position="453"/>
    </location>
    <ligand>
        <name>Mg(2+)</name>
        <dbReference type="ChEBI" id="CHEBI:18420"/>
    </ligand>
</feature>
<feature type="non-terminal residue">
    <location>
        <position position="1053"/>
    </location>
</feature>
<comment type="function">
    <text evidence="1">DNA-dependent RNA polymerase catalyzes the transcription of DNA into RNA using the four ribonucleoside triphosphates as substrates.</text>
</comment>
<comment type="catalytic activity">
    <reaction evidence="1">
        <text>RNA(n) + a ribonucleoside 5'-triphosphate = RNA(n+1) + diphosphate</text>
        <dbReference type="Rhea" id="RHEA:21248"/>
        <dbReference type="Rhea" id="RHEA-COMP:14527"/>
        <dbReference type="Rhea" id="RHEA-COMP:17342"/>
        <dbReference type="ChEBI" id="CHEBI:33019"/>
        <dbReference type="ChEBI" id="CHEBI:61557"/>
        <dbReference type="ChEBI" id="CHEBI:140395"/>
        <dbReference type="EC" id="2.7.7.6"/>
    </reaction>
</comment>
<comment type="cofactor">
    <cofactor evidence="1">
        <name>Mg(2+)</name>
        <dbReference type="ChEBI" id="CHEBI:18420"/>
    </cofactor>
    <text evidence="1">Binds 1 Mg(2+) ion per subunit.</text>
</comment>
<comment type="cofactor">
    <cofactor evidence="1">
        <name>Zn(2+)</name>
        <dbReference type="ChEBI" id="CHEBI:29105"/>
    </cofactor>
    <text evidence="1">Binds 1 Zn(2+) ion per subunit.</text>
</comment>
<comment type="subunit">
    <text evidence="1">The RNAP catalytic core consists of 2 alpha, 1 beta, 1 beta' and 1 omega subunit. When a sigma factor is associated with the core the holoenzyme is formed, which can initiate transcription.</text>
</comment>
<comment type="similarity">
    <text evidence="1 2">Belongs to the RNA polymerase beta' chain family.</text>
</comment>
<keyword id="KW-0240">DNA-directed RNA polymerase</keyword>
<keyword id="KW-0460">Magnesium</keyword>
<keyword id="KW-0479">Metal-binding</keyword>
<keyword id="KW-0548">Nucleotidyltransferase</keyword>
<keyword id="KW-0804">Transcription</keyword>
<keyword id="KW-0808">Transferase</keyword>
<keyword id="KW-0862">Zinc</keyword>
<reference key="1">
    <citation type="submission" date="1996-08" db="EMBL/GenBank/DDBJ databases">
        <title>Cloning part of the rpoC gene encoding the B' subunit of the DNA-dependent RNA polymerase from some Gram-positive bacteria and comparative amino acid sequence.</title>
        <authorList>
            <person name="Morse R."/>
            <person name="Collins M.D."/>
            <person name="Balsdon J.T."/>
            <person name="Reading S."/>
            <person name="Richardson P.T."/>
        </authorList>
    </citation>
    <scope>NUCLEOTIDE SEQUENCE [GENOMIC DNA]</scope>
    <source>
        <strain>NCDO 1676</strain>
    </source>
</reference>
<protein>
    <recommendedName>
        <fullName evidence="1">DNA-directed RNA polymerase subunit beta'</fullName>
        <shortName evidence="1">RNAP subunit beta'</shortName>
        <ecNumber evidence="1">2.7.7.6</ecNumber>
    </recommendedName>
    <alternativeName>
        <fullName evidence="1">RNA polymerase subunit beta'</fullName>
    </alternativeName>
    <alternativeName>
        <fullName evidence="1">Transcriptase subunit beta'</fullName>
    </alternativeName>
</protein>